<name>AMOH_ARTGO</name>
<protein>
    <recommendedName>
        <fullName>Histamine oxidase</fullName>
        <ecNumber evidence="2">1.4.3.22</ecNumber>
    </recommendedName>
    <alternativeName>
        <fullName>Copper amine oxidase</fullName>
    </alternativeName>
</protein>
<proteinExistence type="evidence at protein level"/>
<dbReference type="EC" id="1.4.3.22" evidence="2"/>
<dbReference type="EMBL" id="D38508">
    <property type="protein sequence ID" value="BAA07517.1"/>
    <property type="molecule type" value="Genomic_DNA"/>
</dbReference>
<dbReference type="PIR" id="A56102">
    <property type="entry name" value="A56102"/>
</dbReference>
<dbReference type="SMR" id="Q59118"/>
<dbReference type="BindingDB" id="Q59118"/>
<dbReference type="ChEMBL" id="CHEMBL3988597"/>
<dbReference type="GO" id="GO:0005737">
    <property type="term" value="C:cytoplasm"/>
    <property type="evidence" value="ECO:0007669"/>
    <property type="project" value="UniProtKB-SubCell"/>
</dbReference>
<dbReference type="GO" id="GO:0005507">
    <property type="term" value="F:copper ion binding"/>
    <property type="evidence" value="ECO:0007669"/>
    <property type="project" value="InterPro"/>
</dbReference>
<dbReference type="GO" id="GO:0052597">
    <property type="term" value="F:diamine oxidase activity"/>
    <property type="evidence" value="ECO:0000314"/>
    <property type="project" value="UniProtKB"/>
</dbReference>
<dbReference type="GO" id="GO:0052598">
    <property type="term" value="F:histamine oxidase activity"/>
    <property type="evidence" value="ECO:0007669"/>
    <property type="project" value="RHEA"/>
</dbReference>
<dbReference type="GO" id="GO:0008131">
    <property type="term" value="F:primary methylamine oxidase activity"/>
    <property type="evidence" value="ECO:0007669"/>
    <property type="project" value="InterPro"/>
</dbReference>
<dbReference type="GO" id="GO:0048038">
    <property type="term" value="F:quinone binding"/>
    <property type="evidence" value="ECO:0007669"/>
    <property type="project" value="InterPro"/>
</dbReference>
<dbReference type="GO" id="GO:0009308">
    <property type="term" value="P:amine metabolic process"/>
    <property type="evidence" value="ECO:0007669"/>
    <property type="project" value="InterPro"/>
</dbReference>
<dbReference type="FunFam" id="2.70.98.20:FF:000001">
    <property type="entry name" value="Amine oxidase"/>
    <property type="match status" value="1"/>
</dbReference>
<dbReference type="Gene3D" id="3.10.450.40">
    <property type="match status" value="2"/>
</dbReference>
<dbReference type="Gene3D" id="2.70.98.20">
    <property type="entry name" value="Copper amine oxidase, catalytic domain"/>
    <property type="match status" value="1"/>
</dbReference>
<dbReference type="InterPro" id="IPR054157">
    <property type="entry name" value="AGAO-like_N2"/>
</dbReference>
<dbReference type="InterPro" id="IPR049948">
    <property type="entry name" value="Cu_Am_ox_TPQ-bd"/>
</dbReference>
<dbReference type="InterPro" id="IPR000269">
    <property type="entry name" value="Cu_amine_oxidase"/>
</dbReference>
<dbReference type="InterPro" id="IPR015798">
    <property type="entry name" value="Cu_amine_oxidase_C"/>
</dbReference>
<dbReference type="InterPro" id="IPR036460">
    <property type="entry name" value="Cu_amine_oxidase_C_sf"/>
</dbReference>
<dbReference type="InterPro" id="IPR016182">
    <property type="entry name" value="Cu_amine_oxidase_N-reg"/>
</dbReference>
<dbReference type="InterPro" id="IPR015802">
    <property type="entry name" value="Cu_amine_oxidase_N3"/>
</dbReference>
<dbReference type="NCBIfam" id="NF008559">
    <property type="entry name" value="PRK11504.1"/>
    <property type="match status" value="1"/>
</dbReference>
<dbReference type="PANTHER" id="PTHR10638">
    <property type="entry name" value="COPPER AMINE OXIDASE"/>
    <property type="match status" value="1"/>
</dbReference>
<dbReference type="PANTHER" id="PTHR10638:SF86">
    <property type="entry name" value="COPPER AMINE OXIDASE 1-RELATED"/>
    <property type="match status" value="1"/>
</dbReference>
<dbReference type="Pfam" id="PF21994">
    <property type="entry name" value="AGAO-like_N2"/>
    <property type="match status" value="1"/>
</dbReference>
<dbReference type="Pfam" id="PF01179">
    <property type="entry name" value="Cu_amine_oxid"/>
    <property type="match status" value="1"/>
</dbReference>
<dbReference type="Pfam" id="PF02728">
    <property type="entry name" value="Cu_amine_oxidN3"/>
    <property type="match status" value="1"/>
</dbReference>
<dbReference type="SUPFAM" id="SSF49998">
    <property type="entry name" value="Amine oxidase catalytic domain"/>
    <property type="match status" value="1"/>
</dbReference>
<dbReference type="SUPFAM" id="SSF54416">
    <property type="entry name" value="Amine oxidase N-terminal region"/>
    <property type="match status" value="2"/>
</dbReference>
<dbReference type="PROSITE" id="PS01164">
    <property type="entry name" value="COPPER_AMINE_OXID_1"/>
    <property type="match status" value="1"/>
</dbReference>
<feature type="initiator methionine" description="Removed">
    <location>
        <position position="1"/>
    </location>
</feature>
<feature type="chain" id="PRO_0000064109" description="Histamine oxidase">
    <location>
        <begin position="2"/>
        <end position="684"/>
    </location>
</feature>
<feature type="region of interest" description="Disordered" evidence="5">
    <location>
        <begin position="647"/>
        <end position="684"/>
    </location>
</feature>
<feature type="compositionally biased region" description="Gly residues" evidence="5">
    <location>
        <begin position="675"/>
        <end position="684"/>
    </location>
</feature>
<feature type="active site" description="Proton acceptor" evidence="1">
    <location>
        <position position="318"/>
    </location>
</feature>
<feature type="active site" description="Schiff-base intermediate with substrate; via topaquinone" evidence="1">
    <location>
        <position position="402"/>
    </location>
</feature>
<feature type="binding site" evidence="1">
    <location>
        <begin position="316"/>
        <end position="327"/>
    </location>
    <ligand>
        <name>substrate</name>
    </ligand>
</feature>
<feature type="binding site" evidence="3">
    <location>
        <begin position="399"/>
        <end position="404"/>
    </location>
    <ligand>
        <name>substrate</name>
    </ligand>
</feature>
<feature type="binding site" evidence="1">
    <location>
        <position position="451"/>
    </location>
    <ligand>
        <name>Cu cation</name>
        <dbReference type="ChEBI" id="CHEBI:23378"/>
    </ligand>
</feature>
<feature type="binding site" evidence="1">
    <location>
        <position position="453"/>
    </location>
    <ligand>
        <name>Cu cation</name>
        <dbReference type="ChEBI" id="CHEBI:23378"/>
    </ligand>
</feature>
<feature type="binding site" evidence="3">
    <location>
        <position position="460"/>
    </location>
    <ligand>
        <name>Ca(2+)</name>
        <dbReference type="ChEBI" id="CHEBI:29108"/>
        <label>1</label>
    </ligand>
</feature>
<feature type="binding site" evidence="4">
    <location>
        <position position="460"/>
    </location>
    <ligand>
        <name>Mn(2+)</name>
        <dbReference type="ChEBI" id="CHEBI:29035"/>
    </ligand>
</feature>
<feature type="binding site" evidence="3">
    <location>
        <position position="500"/>
    </location>
    <ligand>
        <name>Ca(2+)</name>
        <dbReference type="ChEBI" id="CHEBI:29108"/>
        <label>2</label>
    </ligand>
</feature>
<feature type="binding site" evidence="3">
    <location>
        <position position="590"/>
    </location>
    <ligand>
        <name>Ca(2+)</name>
        <dbReference type="ChEBI" id="CHEBI:29108"/>
        <label>2</label>
    </ligand>
</feature>
<feature type="binding site" evidence="3">
    <location>
        <position position="601"/>
    </location>
    <ligand>
        <name>Ca(2+)</name>
        <dbReference type="ChEBI" id="CHEBI:29108"/>
        <label>1</label>
    </ligand>
</feature>
<feature type="binding site" evidence="4">
    <location>
        <position position="601"/>
    </location>
    <ligand>
        <name>Mn(2+)</name>
        <dbReference type="ChEBI" id="CHEBI:29035"/>
    </ligand>
</feature>
<feature type="binding site" evidence="1">
    <location>
        <position position="612"/>
    </location>
    <ligand>
        <name>Cu cation</name>
        <dbReference type="ChEBI" id="CHEBI:23378"/>
    </ligand>
</feature>
<feature type="modified residue" description="2',4',5'-topaquinone" evidence="6">
    <location>
        <position position="402"/>
    </location>
</feature>
<feature type="disulfide bond" evidence="1">
    <location>
        <begin position="337"/>
        <end position="363"/>
    </location>
</feature>
<evidence type="ECO:0000250" key="1">
    <source>
        <dbReference type="UniProtKB" id="P12807"/>
    </source>
</evidence>
<evidence type="ECO:0000250" key="2">
    <source>
        <dbReference type="UniProtKB" id="P19801"/>
    </source>
</evidence>
<evidence type="ECO:0000250" key="3">
    <source>
        <dbReference type="UniProtKB" id="P46883"/>
    </source>
</evidence>
<evidence type="ECO:0000250" key="4">
    <source>
        <dbReference type="UniProtKB" id="Q43077"/>
    </source>
</evidence>
<evidence type="ECO:0000256" key="5">
    <source>
        <dbReference type="SAM" id="MobiDB-lite"/>
    </source>
</evidence>
<evidence type="ECO:0000269" key="6">
    <source>
    </source>
</evidence>
<evidence type="ECO:0000305" key="7"/>
<accession>Q59118</accession>
<comment type="function">
    <text>Oxidizes histamine. Other amines including phenethylamine, tyramine, tryptamine, putrescine, and benzylamine also serve as substrate.</text>
</comment>
<comment type="catalytic activity">
    <reaction evidence="2">
        <text>a primary methyl amine + O2 + H2O = an aldehyde + H2O2 + NH4(+)</text>
        <dbReference type="Rhea" id="RHEA:16153"/>
        <dbReference type="ChEBI" id="CHEBI:15377"/>
        <dbReference type="ChEBI" id="CHEBI:15379"/>
        <dbReference type="ChEBI" id="CHEBI:16240"/>
        <dbReference type="ChEBI" id="CHEBI:17478"/>
        <dbReference type="ChEBI" id="CHEBI:28938"/>
        <dbReference type="ChEBI" id="CHEBI:228804"/>
    </reaction>
</comment>
<comment type="catalytic activity">
    <reaction evidence="3">
        <text>histamine + O2 + H2O = imidazole-4-acetaldehyde + H2O2 + NH4(+)</text>
        <dbReference type="Rhea" id="RHEA:25625"/>
        <dbReference type="ChEBI" id="CHEBI:15377"/>
        <dbReference type="ChEBI" id="CHEBI:15379"/>
        <dbReference type="ChEBI" id="CHEBI:16240"/>
        <dbReference type="ChEBI" id="CHEBI:27398"/>
        <dbReference type="ChEBI" id="CHEBI:28938"/>
        <dbReference type="ChEBI" id="CHEBI:58432"/>
        <dbReference type="EC" id="1.4.3.22"/>
    </reaction>
</comment>
<comment type="cofactor">
    <cofactor evidence="3">
        <name>Cu cation</name>
        <dbReference type="ChEBI" id="CHEBI:23378"/>
    </cofactor>
    <cofactor evidence="1">
        <name>Zn(2+)</name>
        <dbReference type="ChEBI" id="CHEBI:29105"/>
    </cofactor>
    <text evidence="1 3">Binds 1 copper ion per subunit (By similarity). Can also use zinc ion as cofactor (By similarity).</text>
</comment>
<comment type="cofactor">
    <cofactor evidence="3">
        <name>Ca(2+)</name>
        <dbReference type="ChEBI" id="CHEBI:29108"/>
    </cofactor>
    <text evidence="3">Binds 2 calcium ions per subunit.</text>
</comment>
<comment type="cofactor">
    <cofactor evidence="3">
        <name>L-topaquinone</name>
        <dbReference type="ChEBI" id="CHEBI:79027"/>
    </cofactor>
    <text evidence="3">Contains 1 topaquinone per subunit.</text>
</comment>
<comment type="cofactor">
    <cofactor evidence="4">
        <name>Mn(2+)</name>
        <dbReference type="ChEBI" id="CHEBI:29035"/>
    </cofactor>
    <text evidence="4">Binds 1 Mn(2+) ion per subunit.</text>
</comment>
<comment type="subunit">
    <text evidence="3">Homodimer.</text>
</comment>
<comment type="subcellular location">
    <subcellularLocation>
        <location>Cytoplasm</location>
    </subcellularLocation>
</comment>
<comment type="induction">
    <text>By histamine.</text>
</comment>
<comment type="PTM">
    <text evidence="3">Topaquinone (TPQ) is generated by copper-dependent autoxidation of a specific tyrosyl residue.</text>
</comment>
<comment type="similarity">
    <text evidence="7">Belongs to the copper/topaquinone oxidase family.</text>
</comment>
<reference key="1">
    <citation type="journal article" date="1995" name="J. Biol. Chem.">
        <title>Copper/topa quinone-containing histamine oxidase from Arthrobacter globiformis. Molecular cloning and sequencing, overproduction of precursor enzyme, and generation of topa quinone cofactor.</title>
        <authorList>
            <person name="Choi Y.-H."/>
            <person name="Matsuzaki R."/>
            <person name="Fukui T."/>
            <person name="Shimizu E."/>
            <person name="Yorifuji T."/>
            <person name="Sato H."/>
            <person name="Ozaki Y."/>
            <person name="Tanizawa K."/>
        </authorList>
    </citation>
    <scope>NUCLEOTIDE SEQUENCE [GENOMIC DNA]</scope>
    <scope>PARTIAL PROTEIN SEQUENCE</scope>
    <scope>TOPAQUINONE AT TYR-402</scope>
    <source>
        <strain>ATCC 8010 / DSM 20124 / BCRC 10598 / JCM 1332 / KCTC 9101 / NBRC 12137 / NCIMB 8907 / NRRL B-2979 / 168</strain>
    </source>
</reference>
<sequence length="684" mass="75111">MTLQTTPSTPLVQDPPVPATLVHAAAQHPLEQLSAEEIHEARRILAEAGLVGESTRFAYLGLIEPPKTTRQGDVTGAARLVRAMLWDAAQSRSLDVRLSLATGLVVDRRELNPEADGQLPVLLEEFGIIEDILSEDPQWNAALTARGLTPAQVRVAPLSAGVFEYGNEEGKRLLRGLGFRQDHPADHPWAHPIDGLVAFVDVENRRVNHLIDDGPVPVPEVNGNYTDPAIRGELRTDLLPIEIMQPEGPSFTLEGNHLSWAGWDLRVGFDAREGLVLHQLHHSHKGRRRPVIHRASISEMVVPYGDPSPYRSWQNYFDSGEYLVGRDANSLRLGCDCLGDITYMSPVVADDFGNPRTIENGICIHEEDAGILWKHTDEWAGSDEVRRNRRLVVSFFTTVGNYDYGFYWYLYLDGTIEFEAKATGIVFTAALPDKDYAYASEIAPGLGAPYHQHLFSARLDMMIDGDANRVEELDLVRLPKGPGNPHGNAFTQKRTLLARESEAVRDADGAKGRVWHISNPDSLNHLGHPVGYTLYPEGNPTLAMADDSSIASRAAFARHHLWVTRHAEEELYAAGDFVNQHPGGAVLPAYVAQDRDIDGQDLVVWHSFGLTHFPRPEDWPIMPVDTTGFTLKPHGFFDENPTLNVPSSAAGHCGTGSEREHAAPGGTAVGHSGPDTGGQGHCGH</sequence>
<keyword id="KW-0186">Copper</keyword>
<keyword id="KW-0963">Cytoplasm</keyword>
<keyword id="KW-0903">Direct protein sequencing</keyword>
<keyword id="KW-1015">Disulfide bond</keyword>
<keyword id="KW-0464">Manganese</keyword>
<keyword id="KW-0479">Metal-binding</keyword>
<keyword id="KW-0560">Oxidoreductase</keyword>
<keyword id="KW-0801">TPQ</keyword>
<organism>
    <name type="scientific">Arthrobacter globiformis</name>
    <dbReference type="NCBI Taxonomy" id="1665"/>
    <lineage>
        <taxon>Bacteria</taxon>
        <taxon>Bacillati</taxon>
        <taxon>Actinomycetota</taxon>
        <taxon>Actinomycetes</taxon>
        <taxon>Micrococcales</taxon>
        <taxon>Micrococcaceae</taxon>
        <taxon>Arthrobacter</taxon>
    </lineage>
</organism>